<gene>
    <name evidence="1" type="primary">proB</name>
    <name type="ordered locus">MA_4101</name>
</gene>
<name>PROB_METAC</name>
<sequence>MTDREQFFRDVNKIVIKIGTSSITRKGCDHTKENCNIDPAFMESIAAQVYELRKHGKEVILVSSGAIGVGLNELGIAPKPREIPIRQAAAAVGQSILMQDWSRAFSKYGMKVAQILLTYEFYSDRVTYLNLRNSISTLLEYEVVPIINENDCTCTNEIEAIFGDNDKLSAMVASKIDADLLIILSDIDGLFDRNPKTHSDAKLLTLIKKITPEIESYGGDPTNFKGVGGMRTKIKAAKICSMAGCYVVIANSEIEDVVTKILSGEEIGTLFLAERHIQKNRARWIILARASGTVRVDAGAKAAVLGKNSLLPAGIVDIEGTFDRGDVVKLECEGKVFAKGITNYTSKELIKIKGAQTNQIDNILGYNNYDNVIKKENIGILEGIN</sequence>
<organism>
    <name type="scientific">Methanosarcina acetivorans (strain ATCC 35395 / DSM 2834 / JCM 12185 / C2A)</name>
    <dbReference type="NCBI Taxonomy" id="188937"/>
    <lineage>
        <taxon>Archaea</taxon>
        <taxon>Methanobacteriati</taxon>
        <taxon>Methanobacteriota</taxon>
        <taxon>Stenosarchaea group</taxon>
        <taxon>Methanomicrobia</taxon>
        <taxon>Methanosarcinales</taxon>
        <taxon>Methanosarcinaceae</taxon>
        <taxon>Methanosarcina</taxon>
    </lineage>
</organism>
<accession>Q9HHA0</accession>
<protein>
    <recommendedName>
        <fullName evidence="1">Glutamate 5-kinase</fullName>
        <ecNumber evidence="1">2.7.2.11</ecNumber>
    </recommendedName>
    <alternativeName>
        <fullName evidence="1">Gamma-glutamyl kinase</fullName>
        <shortName evidence="1">GK</shortName>
    </alternativeName>
</protein>
<comment type="function">
    <text evidence="1">Catalyzes the transfer of a phosphate group to glutamate to form L-glutamate 5-phosphate.</text>
</comment>
<comment type="catalytic activity">
    <reaction evidence="1">
        <text>L-glutamate + ATP = L-glutamyl 5-phosphate + ADP</text>
        <dbReference type="Rhea" id="RHEA:14877"/>
        <dbReference type="ChEBI" id="CHEBI:29985"/>
        <dbReference type="ChEBI" id="CHEBI:30616"/>
        <dbReference type="ChEBI" id="CHEBI:58274"/>
        <dbReference type="ChEBI" id="CHEBI:456216"/>
        <dbReference type="EC" id="2.7.2.11"/>
    </reaction>
</comment>
<comment type="pathway">
    <text evidence="1">Amino-acid biosynthesis; L-proline biosynthesis; L-glutamate 5-semialdehyde from L-glutamate: step 1/2.</text>
</comment>
<comment type="subcellular location">
    <subcellularLocation>
        <location evidence="1">Cytoplasm</location>
    </subcellularLocation>
</comment>
<comment type="similarity">
    <text evidence="1">Belongs to the glutamate 5-kinase family.</text>
</comment>
<evidence type="ECO:0000255" key="1">
    <source>
        <dbReference type="HAMAP-Rule" id="MF_00456"/>
    </source>
</evidence>
<reference key="1">
    <citation type="journal article" date="2002" name="J. Bacteriol.">
        <title>Directed mutagenesis and plasmid-based complementation in the methanogenic archaeon Methanosarcina acetivorans C2A demonstrated by genetic analysis of proline biosynthesis.</title>
        <authorList>
            <person name="Zhang J.K."/>
            <person name="White A.K."/>
            <person name="Kuettner H.C."/>
            <person name="Boccazzi P."/>
            <person name="Metcalf W.W."/>
        </authorList>
    </citation>
    <scope>NUCLEOTIDE SEQUENCE [GENOMIC DNA]</scope>
    <source>
        <strain>ATCC 35395 / DSM 2834 / JCM 12185 / C2A</strain>
    </source>
</reference>
<reference key="2">
    <citation type="journal article" date="2002" name="Genome Res.">
        <title>The genome of Methanosarcina acetivorans reveals extensive metabolic and physiological diversity.</title>
        <authorList>
            <person name="Galagan J.E."/>
            <person name="Nusbaum C."/>
            <person name="Roy A."/>
            <person name="Endrizzi M.G."/>
            <person name="Macdonald P."/>
            <person name="FitzHugh W."/>
            <person name="Calvo S."/>
            <person name="Engels R."/>
            <person name="Smirnov S."/>
            <person name="Atnoor D."/>
            <person name="Brown A."/>
            <person name="Allen N."/>
            <person name="Naylor J."/>
            <person name="Stange-Thomann N."/>
            <person name="DeArellano K."/>
            <person name="Johnson R."/>
            <person name="Linton L."/>
            <person name="McEwan P."/>
            <person name="McKernan K."/>
            <person name="Talamas J."/>
            <person name="Tirrell A."/>
            <person name="Ye W."/>
            <person name="Zimmer A."/>
            <person name="Barber R.D."/>
            <person name="Cann I."/>
            <person name="Graham D.E."/>
            <person name="Grahame D.A."/>
            <person name="Guss A.M."/>
            <person name="Hedderich R."/>
            <person name="Ingram-Smith C."/>
            <person name="Kuettner H.C."/>
            <person name="Krzycki J.A."/>
            <person name="Leigh J.A."/>
            <person name="Li W."/>
            <person name="Liu J."/>
            <person name="Mukhopadhyay B."/>
            <person name="Reeve J.N."/>
            <person name="Smith K."/>
            <person name="Springer T.A."/>
            <person name="Umayam L.A."/>
            <person name="White O."/>
            <person name="White R.H."/>
            <person name="de Macario E.C."/>
            <person name="Ferry J.G."/>
            <person name="Jarrell K.F."/>
            <person name="Jing H."/>
            <person name="Macario A.J.L."/>
            <person name="Paulsen I.T."/>
            <person name="Pritchett M."/>
            <person name="Sowers K.R."/>
            <person name="Swanson R.V."/>
            <person name="Zinder S.H."/>
            <person name="Lander E."/>
            <person name="Metcalf W.W."/>
            <person name="Birren B."/>
        </authorList>
    </citation>
    <scope>NUCLEOTIDE SEQUENCE [LARGE SCALE GENOMIC DNA]</scope>
    <source>
        <strain>ATCC 35395 / DSM 2834 / JCM 12185 / C2A</strain>
    </source>
</reference>
<proteinExistence type="inferred from homology"/>
<keyword id="KW-0028">Amino-acid biosynthesis</keyword>
<keyword id="KW-0067">ATP-binding</keyword>
<keyword id="KW-0963">Cytoplasm</keyword>
<keyword id="KW-0418">Kinase</keyword>
<keyword id="KW-0547">Nucleotide-binding</keyword>
<keyword id="KW-0641">Proline biosynthesis</keyword>
<keyword id="KW-1185">Reference proteome</keyword>
<keyword id="KW-0808">Transferase</keyword>
<feature type="chain" id="PRO_0000109765" description="Glutamate 5-kinase">
    <location>
        <begin position="1"/>
        <end position="385"/>
    </location>
</feature>
<feature type="domain" description="PUA" evidence="1">
    <location>
        <begin position="291"/>
        <end position="367"/>
    </location>
</feature>
<feature type="binding site" evidence="1">
    <location>
        <position position="17"/>
    </location>
    <ligand>
        <name>ATP</name>
        <dbReference type="ChEBI" id="CHEBI:30616"/>
    </ligand>
</feature>
<feature type="binding site" evidence="1">
    <location>
        <position position="64"/>
    </location>
    <ligand>
        <name>substrate</name>
    </ligand>
</feature>
<feature type="binding site" evidence="1">
    <location>
        <position position="151"/>
    </location>
    <ligand>
        <name>substrate</name>
    </ligand>
</feature>
<feature type="binding site" evidence="1">
    <location>
        <position position="165"/>
    </location>
    <ligand>
        <name>substrate</name>
    </ligand>
</feature>
<feature type="binding site" evidence="1">
    <location>
        <begin position="185"/>
        <end position="186"/>
    </location>
    <ligand>
        <name>ATP</name>
        <dbReference type="ChEBI" id="CHEBI:30616"/>
    </ligand>
</feature>
<dbReference type="EC" id="2.7.2.11" evidence="1"/>
<dbReference type="EMBL" id="AF305580">
    <property type="protein sequence ID" value="AAG22032.1"/>
    <property type="molecule type" value="Genomic_DNA"/>
</dbReference>
<dbReference type="EMBL" id="AE010299">
    <property type="protein sequence ID" value="AAM07449.1"/>
    <property type="molecule type" value="Genomic_DNA"/>
</dbReference>
<dbReference type="RefSeq" id="WP_011023993.1">
    <property type="nucleotide sequence ID" value="NC_003552.1"/>
</dbReference>
<dbReference type="SMR" id="Q9HHA0"/>
<dbReference type="STRING" id="188937.MA_4101"/>
<dbReference type="EnsemblBacteria" id="AAM07449">
    <property type="protein sequence ID" value="AAM07449"/>
    <property type="gene ID" value="MA_4101"/>
</dbReference>
<dbReference type="GeneID" id="1475995"/>
<dbReference type="KEGG" id="mac:MA_4101"/>
<dbReference type="HOGENOM" id="CLU_025400_2_0_2"/>
<dbReference type="InParanoid" id="Q9HHA0"/>
<dbReference type="OrthoDB" id="142069at2157"/>
<dbReference type="PhylomeDB" id="Q9HHA0"/>
<dbReference type="UniPathway" id="UPA00098">
    <property type="reaction ID" value="UER00359"/>
</dbReference>
<dbReference type="Proteomes" id="UP000002487">
    <property type="component" value="Chromosome"/>
</dbReference>
<dbReference type="GO" id="GO:0005829">
    <property type="term" value="C:cytosol"/>
    <property type="evidence" value="ECO:0000318"/>
    <property type="project" value="GO_Central"/>
</dbReference>
<dbReference type="GO" id="GO:0005524">
    <property type="term" value="F:ATP binding"/>
    <property type="evidence" value="ECO:0007669"/>
    <property type="project" value="UniProtKB-KW"/>
</dbReference>
<dbReference type="GO" id="GO:0004349">
    <property type="term" value="F:glutamate 5-kinase activity"/>
    <property type="evidence" value="ECO:0000318"/>
    <property type="project" value="GO_Central"/>
</dbReference>
<dbReference type="GO" id="GO:0003723">
    <property type="term" value="F:RNA binding"/>
    <property type="evidence" value="ECO:0007669"/>
    <property type="project" value="InterPro"/>
</dbReference>
<dbReference type="GO" id="GO:0055129">
    <property type="term" value="P:L-proline biosynthetic process"/>
    <property type="evidence" value="ECO:0007669"/>
    <property type="project" value="UniProtKB-UniRule"/>
</dbReference>
<dbReference type="GO" id="GO:0006561">
    <property type="term" value="P:proline biosynthetic process"/>
    <property type="evidence" value="ECO:0000318"/>
    <property type="project" value="GO_Central"/>
</dbReference>
<dbReference type="CDD" id="cd04242">
    <property type="entry name" value="AAK_G5K_ProB"/>
    <property type="match status" value="1"/>
</dbReference>
<dbReference type="CDD" id="cd21157">
    <property type="entry name" value="PUA_G5K"/>
    <property type="match status" value="1"/>
</dbReference>
<dbReference type="FunFam" id="3.40.1160.10:FF:000050">
    <property type="entry name" value="Glutamate 5-kinase"/>
    <property type="match status" value="1"/>
</dbReference>
<dbReference type="FunFam" id="3.40.1160.10:FF:000053">
    <property type="entry name" value="Glutamate 5-kinase"/>
    <property type="match status" value="1"/>
</dbReference>
<dbReference type="Gene3D" id="3.40.1160.10">
    <property type="entry name" value="Acetylglutamate kinase-like"/>
    <property type="match status" value="2"/>
</dbReference>
<dbReference type="Gene3D" id="2.30.130.10">
    <property type="entry name" value="PUA domain"/>
    <property type="match status" value="1"/>
</dbReference>
<dbReference type="HAMAP" id="MF_00456">
    <property type="entry name" value="ProB"/>
    <property type="match status" value="1"/>
</dbReference>
<dbReference type="InterPro" id="IPR036393">
    <property type="entry name" value="AceGlu_kinase-like_sf"/>
</dbReference>
<dbReference type="InterPro" id="IPR001048">
    <property type="entry name" value="Asp/Glu/Uridylate_kinase"/>
</dbReference>
<dbReference type="InterPro" id="IPR041739">
    <property type="entry name" value="G5K_ProB"/>
</dbReference>
<dbReference type="InterPro" id="IPR001057">
    <property type="entry name" value="Glu/AcGlu_kinase"/>
</dbReference>
<dbReference type="InterPro" id="IPR011529">
    <property type="entry name" value="Glu_5kinase"/>
</dbReference>
<dbReference type="InterPro" id="IPR005715">
    <property type="entry name" value="Glu_5kinase/COase_Synthase"/>
</dbReference>
<dbReference type="InterPro" id="IPR019797">
    <property type="entry name" value="Glutamate_5-kinase_CS"/>
</dbReference>
<dbReference type="InterPro" id="IPR002478">
    <property type="entry name" value="PUA"/>
</dbReference>
<dbReference type="InterPro" id="IPR015947">
    <property type="entry name" value="PUA-like_sf"/>
</dbReference>
<dbReference type="InterPro" id="IPR036974">
    <property type="entry name" value="PUA_sf"/>
</dbReference>
<dbReference type="NCBIfam" id="TIGR01027">
    <property type="entry name" value="proB"/>
    <property type="match status" value="1"/>
</dbReference>
<dbReference type="PANTHER" id="PTHR43654">
    <property type="entry name" value="GLUTAMATE 5-KINASE"/>
    <property type="match status" value="1"/>
</dbReference>
<dbReference type="PANTHER" id="PTHR43654:SF3">
    <property type="entry name" value="GLUTAMATE 5-KINASE"/>
    <property type="match status" value="1"/>
</dbReference>
<dbReference type="Pfam" id="PF00696">
    <property type="entry name" value="AA_kinase"/>
    <property type="match status" value="1"/>
</dbReference>
<dbReference type="Pfam" id="PF01472">
    <property type="entry name" value="PUA"/>
    <property type="match status" value="1"/>
</dbReference>
<dbReference type="PIRSF" id="PIRSF000729">
    <property type="entry name" value="GK"/>
    <property type="match status" value="1"/>
</dbReference>
<dbReference type="PRINTS" id="PR00474">
    <property type="entry name" value="GLU5KINASE"/>
</dbReference>
<dbReference type="SMART" id="SM00359">
    <property type="entry name" value="PUA"/>
    <property type="match status" value="1"/>
</dbReference>
<dbReference type="SUPFAM" id="SSF53633">
    <property type="entry name" value="Carbamate kinase-like"/>
    <property type="match status" value="1"/>
</dbReference>
<dbReference type="SUPFAM" id="SSF88697">
    <property type="entry name" value="PUA domain-like"/>
    <property type="match status" value="1"/>
</dbReference>
<dbReference type="PROSITE" id="PS00902">
    <property type="entry name" value="GLUTAMATE_5_KINASE"/>
    <property type="match status" value="1"/>
</dbReference>
<dbReference type="PROSITE" id="PS50890">
    <property type="entry name" value="PUA"/>
    <property type="match status" value="1"/>
</dbReference>